<organism>
    <name type="scientific">Actinobacillus pleuropneumoniae serotype 3 (strain JL03)</name>
    <dbReference type="NCBI Taxonomy" id="434271"/>
    <lineage>
        <taxon>Bacteria</taxon>
        <taxon>Pseudomonadati</taxon>
        <taxon>Pseudomonadota</taxon>
        <taxon>Gammaproteobacteria</taxon>
        <taxon>Pasteurellales</taxon>
        <taxon>Pasteurellaceae</taxon>
        <taxon>Actinobacillus</taxon>
    </lineage>
</organism>
<gene>
    <name evidence="1" type="primary">ubiD</name>
    <name type="ordered locus">APJL_1471</name>
</gene>
<protein>
    <recommendedName>
        <fullName evidence="1">3-octaprenyl-4-hydroxybenzoate carboxy-lyase</fullName>
        <ecNumber evidence="1">4.1.1.98</ecNumber>
    </recommendedName>
    <alternativeName>
        <fullName evidence="1">Polyprenyl p-hydroxybenzoate decarboxylase</fullName>
    </alternativeName>
</protein>
<sequence length="487" mass="54961">MKYKDLREFLTLLEGQGELVRIKQEIDPYLEMAEISDRTLRKGGPAILFEKPKGYRMPVLCNLFGTPKRVALGMGQEDTHALRELGKLLAFLKEPEPPKGFKELIGQLPQWKQVLNMPSKVLGKADCQQVVLSGDEVDLYKLPIMHCHEGDVAPLVTWGLTVTQGPYKKRQNLGIYRQQLIGKNKLIMRWLSHRGGALDFHEWKEANPDKPFPVSVAIGADPATILAAVTPIPDTLSEYAFAGLLRGQKTEVTKSISNDLEIPASAEIVLEGYIDPNETALEGPYGDHTGYYNEQEYFPVFTVTHITMRRDAIYHSTYTGRPPDEPAVLGEALNEVFIPILQKQFPEIVDFYLPPEGCSYRLAVVTIKKQYAGHAKRVMMGVWSFLRQFMYTKFVIVCDDDVNARDWKDVIWAITTRCDPIRDTTLIDHTPIDYLDFASPIAGLGSKMGIDATNKWPGETSREWGTPIKKDPNVVKLVDEIWDQLGL</sequence>
<evidence type="ECO:0000255" key="1">
    <source>
        <dbReference type="HAMAP-Rule" id="MF_01636"/>
    </source>
</evidence>
<proteinExistence type="inferred from homology"/>
<dbReference type="EC" id="4.1.1.98" evidence="1"/>
<dbReference type="EMBL" id="CP000687">
    <property type="protein sequence ID" value="ABY70023.1"/>
    <property type="molecule type" value="Genomic_DNA"/>
</dbReference>
<dbReference type="RefSeq" id="WP_012263237.1">
    <property type="nucleotide sequence ID" value="NC_010278.1"/>
</dbReference>
<dbReference type="SMR" id="B0BR38"/>
<dbReference type="KEGG" id="apj:APJL_1471"/>
<dbReference type="HOGENOM" id="CLU_023348_4_1_6"/>
<dbReference type="UniPathway" id="UPA00232"/>
<dbReference type="Proteomes" id="UP000008547">
    <property type="component" value="Chromosome"/>
</dbReference>
<dbReference type="GO" id="GO:0005829">
    <property type="term" value="C:cytosol"/>
    <property type="evidence" value="ECO:0007669"/>
    <property type="project" value="TreeGrafter"/>
</dbReference>
<dbReference type="GO" id="GO:0005886">
    <property type="term" value="C:plasma membrane"/>
    <property type="evidence" value="ECO:0007669"/>
    <property type="project" value="UniProtKB-SubCell"/>
</dbReference>
<dbReference type="GO" id="GO:0008694">
    <property type="term" value="F:3-octaprenyl-4-hydroxybenzoate carboxy-lyase activity"/>
    <property type="evidence" value="ECO:0007669"/>
    <property type="project" value="UniProtKB-UniRule"/>
</dbReference>
<dbReference type="GO" id="GO:0046872">
    <property type="term" value="F:metal ion binding"/>
    <property type="evidence" value="ECO:0007669"/>
    <property type="project" value="UniProtKB-KW"/>
</dbReference>
<dbReference type="GO" id="GO:0006744">
    <property type="term" value="P:ubiquinone biosynthetic process"/>
    <property type="evidence" value="ECO:0007669"/>
    <property type="project" value="UniProtKB-UniRule"/>
</dbReference>
<dbReference type="FunFam" id="1.20.5.570:FF:000001">
    <property type="entry name" value="3-octaprenyl-4-hydroxybenzoate carboxy-lyase"/>
    <property type="match status" value="1"/>
</dbReference>
<dbReference type="FunFam" id="3.40.1670.10:FF:000001">
    <property type="entry name" value="3-octaprenyl-4-hydroxybenzoate carboxy-lyase"/>
    <property type="match status" value="1"/>
</dbReference>
<dbReference type="Gene3D" id="1.20.5.570">
    <property type="entry name" value="Single helix bin"/>
    <property type="match status" value="1"/>
</dbReference>
<dbReference type="Gene3D" id="3.40.1670.10">
    <property type="entry name" value="UbiD C-terminal domain-like"/>
    <property type="match status" value="1"/>
</dbReference>
<dbReference type="HAMAP" id="MF_01636">
    <property type="entry name" value="UbiD"/>
    <property type="match status" value="1"/>
</dbReference>
<dbReference type="InterPro" id="IPR002830">
    <property type="entry name" value="UbiD"/>
</dbReference>
<dbReference type="InterPro" id="IPR049381">
    <property type="entry name" value="UbiD-like_C"/>
</dbReference>
<dbReference type="InterPro" id="IPR049383">
    <property type="entry name" value="UbiD-like_N"/>
</dbReference>
<dbReference type="InterPro" id="IPR023677">
    <property type="entry name" value="UbiD_bacteria"/>
</dbReference>
<dbReference type="InterPro" id="IPR048304">
    <property type="entry name" value="UbiD_Rift_dom"/>
</dbReference>
<dbReference type="NCBIfam" id="NF008175">
    <property type="entry name" value="PRK10922.1"/>
    <property type="match status" value="1"/>
</dbReference>
<dbReference type="NCBIfam" id="TIGR00148">
    <property type="entry name" value="UbiD family decarboxylase"/>
    <property type="match status" value="1"/>
</dbReference>
<dbReference type="PANTHER" id="PTHR30108">
    <property type="entry name" value="3-OCTAPRENYL-4-HYDROXYBENZOATE CARBOXY-LYASE-RELATED"/>
    <property type="match status" value="1"/>
</dbReference>
<dbReference type="PANTHER" id="PTHR30108:SF17">
    <property type="entry name" value="FERULIC ACID DECARBOXYLASE 1"/>
    <property type="match status" value="1"/>
</dbReference>
<dbReference type="Pfam" id="PF01977">
    <property type="entry name" value="UbiD"/>
    <property type="match status" value="1"/>
</dbReference>
<dbReference type="Pfam" id="PF20696">
    <property type="entry name" value="UbiD_C"/>
    <property type="match status" value="1"/>
</dbReference>
<dbReference type="Pfam" id="PF20695">
    <property type="entry name" value="UbiD_N"/>
    <property type="match status" value="1"/>
</dbReference>
<dbReference type="SUPFAM" id="SSF50475">
    <property type="entry name" value="FMN-binding split barrel"/>
    <property type="match status" value="1"/>
</dbReference>
<dbReference type="SUPFAM" id="SSF143968">
    <property type="entry name" value="UbiD C-terminal domain-like"/>
    <property type="match status" value="1"/>
</dbReference>
<keyword id="KW-1003">Cell membrane</keyword>
<keyword id="KW-0210">Decarboxylase</keyword>
<keyword id="KW-0285">Flavoprotein</keyword>
<keyword id="KW-0288">FMN</keyword>
<keyword id="KW-0456">Lyase</keyword>
<keyword id="KW-0464">Manganese</keyword>
<keyword id="KW-0472">Membrane</keyword>
<keyword id="KW-0479">Metal-binding</keyword>
<keyword id="KW-0831">Ubiquinone biosynthesis</keyword>
<name>UBID_ACTPJ</name>
<accession>B0BR38</accession>
<reference key="1">
    <citation type="journal article" date="2008" name="PLoS ONE">
        <title>Genome biology of Actinobacillus pleuropneumoniae JL03, an isolate of serotype 3 prevalent in China.</title>
        <authorList>
            <person name="Xu Z."/>
            <person name="Zhou Y."/>
            <person name="Li L."/>
            <person name="Zhou R."/>
            <person name="Xiao S."/>
            <person name="Wan Y."/>
            <person name="Zhang S."/>
            <person name="Wang K."/>
            <person name="Li W."/>
            <person name="Li L."/>
            <person name="Jin H."/>
            <person name="Kang M."/>
            <person name="Dalai B."/>
            <person name="Li T."/>
            <person name="Liu L."/>
            <person name="Cheng Y."/>
            <person name="Zhang L."/>
            <person name="Xu T."/>
            <person name="Zheng H."/>
            <person name="Pu S."/>
            <person name="Wang B."/>
            <person name="Gu W."/>
            <person name="Zhang X.L."/>
            <person name="Zhu G.-F."/>
            <person name="Wang S."/>
            <person name="Zhao G.-P."/>
            <person name="Chen H."/>
        </authorList>
    </citation>
    <scope>NUCLEOTIDE SEQUENCE [LARGE SCALE GENOMIC DNA]</scope>
    <source>
        <strain>JL03</strain>
    </source>
</reference>
<feature type="chain" id="PRO_1000186705" description="3-octaprenyl-4-hydroxybenzoate carboxy-lyase">
    <location>
        <begin position="1"/>
        <end position="487"/>
    </location>
</feature>
<feature type="active site" description="Proton donor" evidence="1">
    <location>
        <position position="287"/>
    </location>
</feature>
<feature type="binding site" evidence="1">
    <location>
        <position position="172"/>
    </location>
    <ligand>
        <name>Mn(2+)</name>
        <dbReference type="ChEBI" id="CHEBI:29035"/>
    </ligand>
</feature>
<feature type="binding site" evidence="1">
    <location>
        <begin position="175"/>
        <end position="177"/>
    </location>
    <ligand>
        <name>prenylated FMN</name>
        <dbReference type="ChEBI" id="CHEBI:87746"/>
    </ligand>
</feature>
<feature type="binding site" evidence="1">
    <location>
        <begin position="189"/>
        <end position="191"/>
    </location>
    <ligand>
        <name>prenylated FMN</name>
        <dbReference type="ChEBI" id="CHEBI:87746"/>
    </ligand>
</feature>
<feature type="binding site" evidence="1">
    <location>
        <begin position="194"/>
        <end position="195"/>
    </location>
    <ligand>
        <name>prenylated FMN</name>
        <dbReference type="ChEBI" id="CHEBI:87746"/>
    </ligand>
</feature>
<feature type="binding site" evidence="1">
    <location>
        <position position="238"/>
    </location>
    <ligand>
        <name>Mn(2+)</name>
        <dbReference type="ChEBI" id="CHEBI:29035"/>
    </ligand>
</feature>
<comment type="function">
    <text evidence="1">Catalyzes the decarboxylation of 3-octaprenyl-4-hydroxy benzoate to 2-octaprenylphenol, an intermediate step in ubiquinone biosynthesis.</text>
</comment>
<comment type="catalytic activity">
    <reaction evidence="1">
        <text>a 4-hydroxy-3-(all-trans-polyprenyl)benzoate + H(+) = a 2-(all-trans-polyprenyl)phenol + CO2</text>
        <dbReference type="Rhea" id="RHEA:41680"/>
        <dbReference type="Rhea" id="RHEA-COMP:9514"/>
        <dbReference type="Rhea" id="RHEA-COMP:9516"/>
        <dbReference type="ChEBI" id="CHEBI:1269"/>
        <dbReference type="ChEBI" id="CHEBI:15378"/>
        <dbReference type="ChEBI" id="CHEBI:16526"/>
        <dbReference type="ChEBI" id="CHEBI:78396"/>
        <dbReference type="EC" id="4.1.1.98"/>
    </reaction>
</comment>
<comment type="cofactor">
    <cofactor evidence="1">
        <name>prenylated FMN</name>
        <dbReference type="ChEBI" id="CHEBI:87746"/>
    </cofactor>
    <text evidence="1">Binds 1 prenylated FMN per subunit.</text>
</comment>
<comment type="cofactor">
    <cofactor evidence="1">
        <name>Mn(2+)</name>
        <dbReference type="ChEBI" id="CHEBI:29035"/>
    </cofactor>
</comment>
<comment type="pathway">
    <text evidence="1">Cofactor biosynthesis; ubiquinone biosynthesis.</text>
</comment>
<comment type="subunit">
    <text evidence="1">Homohexamer.</text>
</comment>
<comment type="subcellular location">
    <subcellularLocation>
        <location evidence="1">Cell membrane</location>
        <topology evidence="1">Peripheral membrane protein</topology>
    </subcellularLocation>
</comment>
<comment type="similarity">
    <text evidence="1">Belongs to the UbiD family.</text>
</comment>